<comment type="function">
    <text evidence="1">Component of the proteasome core, a large protease complex with broad specificity involved in protein degradation.</text>
</comment>
<comment type="catalytic activity">
    <reaction evidence="1">
        <text>Cleavage of peptide bonds with very broad specificity.</text>
        <dbReference type="EC" id="3.4.25.1"/>
    </reaction>
</comment>
<comment type="activity regulation">
    <text evidence="1">The formation of the proteasomal ATPase PAN-20S proteasome complex, via the docking of the C-termini of PAN into the intersubunit pockets in the alpha-rings, triggers opening of the gate for substrate entry. Interconversion between the open-gate and close-gate conformations leads to a dynamic regulation of the 20S proteasome proteolysis activity.</text>
</comment>
<comment type="subunit">
    <text evidence="1">The 20S proteasome core is composed of 14 alpha and 14 beta subunits that assemble into four stacked heptameric rings, resulting in a barrel-shaped structure. The two inner rings, each composed of seven catalytic beta subunits, are sandwiched by two outer rings, each composed of seven alpha subunits. The catalytic chamber with the active sites is on the inside of the barrel. Has a gated structure, the ends of the cylinder being occluded by the N-termini of the alpha-subunits. Is capped at one or both ends by the proteasome regulatory ATPase, PAN.</text>
</comment>
<comment type="subcellular location">
    <subcellularLocation>
        <location evidence="1">Cytoplasm</location>
    </subcellularLocation>
</comment>
<comment type="similarity">
    <text evidence="1">Belongs to the peptidase T1B family.</text>
</comment>
<reference key="1">
    <citation type="journal article" date="2009" name="Proc. Natl. Acad. Sci. U.S.A.">
        <title>Biogeography of the Sulfolobus islandicus pan-genome.</title>
        <authorList>
            <person name="Reno M.L."/>
            <person name="Held N.L."/>
            <person name="Fields C.J."/>
            <person name="Burke P.V."/>
            <person name="Whitaker R.J."/>
        </authorList>
    </citation>
    <scope>NUCLEOTIDE SEQUENCE [LARGE SCALE GENOMIC DNA]</scope>
    <source>
        <strain>M.16.4 / Kamchatka #3</strain>
    </source>
</reference>
<accession>C4KIR0</accession>
<keyword id="KW-0068">Autocatalytic cleavage</keyword>
<keyword id="KW-0963">Cytoplasm</keyword>
<keyword id="KW-0378">Hydrolase</keyword>
<keyword id="KW-0645">Protease</keyword>
<keyword id="KW-0647">Proteasome</keyword>
<keyword id="KW-0888">Threonine protease</keyword>
<keyword id="KW-0865">Zymogen</keyword>
<evidence type="ECO:0000255" key="1">
    <source>
        <dbReference type="HAMAP-Rule" id="MF_02113"/>
    </source>
</evidence>
<protein>
    <recommendedName>
        <fullName evidence="1">Proteasome subunit beta 2</fullName>
        <ecNumber evidence="1">3.4.25.1</ecNumber>
    </recommendedName>
    <alternativeName>
        <fullName evidence="1">20S proteasome beta subunit 2</fullName>
    </alternativeName>
    <alternativeName>
        <fullName evidence="1">Proteasome core protein PsmB 2</fullName>
    </alternativeName>
</protein>
<name>PSB2_SACI6</name>
<organism>
    <name type="scientific">Saccharolobus islandicus (strain M.16.4 / Kamchatka #3)</name>
    <name type="common">Sulfolobus islandicus</name>
    <dbReference type="NCBI Taxonomy" id="426118"/>
    <lineage>
        <taxon>Archaea</taxon>
        <taxon>Thermoproteota</taxon>
        <taxon>Thermoprotei</taxon>
        <taxon>Sulfolobales</taxon>
        <taxon>Sulfolobaceae</taxon>
        <taxon>Saccharolobus</taxon>
    </lineage>
</organism>
<dbReference type="EC" id="3.4.25.1" evidence="1"/>
<dbReference type="EMBL" id="CP001402">
    <property type="protein sequence ID" value="ACR42474.1"/>
    <property type="molecule type" value="Genomic_DNA"/>
</dbReference>
<dbReference type="SMR" id="C4KIR0"/>
<dbReference type="KEGG" id="sid:M164_1871"/>
<dbReference type="HOGENOM" id="CLU_035750_7_2_2"/>
<dbReference type="Proteomes" id="UP000001479">
    <property type="component" value="Chromosome"/>
</dbReference>
<dbReference type="GO" id="GO:0005737">
    <property type="term" value="C:cytoplasm"/>
    <property type="evidence" value="ECO:0007669"/>
    <property type="project" value="UniProtKB-SubCell"/>
</dbReference>
<dbReference type="GO" id="GO:0019774">
    <property type="term" value="C:proteasome core complex, beta-subunit complex"/>
    <property type="evidence" value="ECO:0007669"/>
    <property type="project" value="UniProtKB-UniRule"/>
</dbReference>
<dbReference type="GO" id="GO:0004298">
    <property type="term" value="F:threonine-type endopeptidase activity"/>
    <property type="evidence" value="ECO:0007669"/>
    <property type="project" value="UniProtKB-UniRule"/>
</dbReference>
<dbReference type="GO" id="GO:0010498">
    <property type="term" value="P:proteasomal protein catabolic process"/>
    <property type="evidence" value="ECO:0007669"/>
    <property type="project" value="UniProtKB-UniRule"/>
</dbReference>
<dbReference type="FunFam" id="3.60.20.10:FF:000079">
    <property type="entry name" value="Proteasome subunit beta 2"/>
    <property type="match status" value="1"/>
</dbReference>
<dbReference type="Gene3D" id="3.60.20.10">
    <property type="entry name" value="Glutamine Phosphoribosylpyrophosphate, subunit 1, domain 1"/>
    <property type="match status" value="1"/>
</dbReference>
<dbReference type="HAMAP" id="MF_02113_A">
    <property type="entry name" value="Proteasome_B_A"/>
    <property type="match status" value="1"/>
</dbReference>
<dbReference type="InterPro" id="IPR029055">
    <property type="entry name" value="Ntn_hydrolases_N"/>
</dbReference>
<dbReference type="InterPro" id="IPR019983">
    <property type="entry name" value="Pept_T1A_Psome_bsu_arc"/>
</dbReference>
<dbReference type="InterPro" id="IPR000243">
    <property type="entry name" value="Pept_T1A_subB"/>
</dbReference>
<dbReference type="InterPro" id="IPR016050">
    <property type="entry name" value="Proteasome_bsu_CS"/>
</dbReference>
<dbReference type="InterPro" id="IPR001353">
    <property type="entry name" value="Proteasome_sua/b"/>
</dbReference>
<dbReference type="InterPro" id="IPR023333">
    <property type="entry name" value="Proteasome_suB-type"/>
</dbReference>
<dbReference type="NCBIfam" id="TIGR03634">
    <property type="entry name" value="arc_protsome_B"/>
    <property type="match status" value="1"/>
</dbReference>
<dbReference type="PANTHER" id="PTHR32194:SF0">
    <property type="entry name" value="ATP-DEPENDENT PROTEASE SUBUNIT HSLV"/>
    <property type="match status" value="1"/>
</dbReference>
<dbReference type="PANTHER" id="PTHR32194">
    <property type="entry name" value="METALLOPROTEASE TLDD"/>
    <property type="match status" value="1"/>
</dbReference>
<dbReference type="Pfam" id="PF00227">
    <property type="entry name" value="Proteasome"/>
    <property type="match status" value="1"/>
</dbReference>
<dbReference type="PRINTS" id="PR00141">
    <property type="entry name" value="PROTEASOME"/>
</dbReference>
<dbReference type="SUPFAM" id="SSF56235">
    <property type="entry name" value="N-terminal nucleophile aminohydrolases (Ntn hydrolases)"/>
    <property type="match status" value="1"/>
</dbReference>
<dbReference type="PROSITE" id="PS00854">
    <property type="entry name" value="PROTEASOME_BETA_1"/>
    <property type="match status" value="1"/>
</dbReference>
<dbReference type="PROSITE" id="PS51476">
    <property type="entry name" value="PROTEASOME_BETA_2"/>
    <property type="match status" value="1"/>
</dbReference>
<gene>
    <name evidence="1" type="primary">psmB2</name>
    <name type="ordered locus">M164_1871</name>
</gene>
<feature type="propeptide" id="PRO_0000397444" description="Removed in mature form; by autocatalysis" evidence="1">
    <location>
        <begin position="1"/>
        <end position="6"/>
    </location>
</feature>
<feature type="chain" id="PRO_0000397445" description="Proteasome subunit beta 2">
    <location>
        <begin position="7"/>
        <end position="196"/>
    </location>
</feature>
<feature type="active site" description="Nucleophile" evidence="1">
    <location>
        <position position="7"/>
    </location>
</feature>
<proteinExistence type="inferred from homology"/>
<sequence>MEELPATAIGLKVNDGIVLASERRLSYGGYVLSKQAKKVHKIGKFLMAGAGIYGDLQTLTRIMNVEIKYYEISTGKPISVHAAAKLLSVILYQYKVMPFISEILFGGVDEKGPQLYVLDPIGSLIEDNYAAVGSGARIAIGVLESEYDPNMNLDIAAQLITKAIKASIERDITSGDGIDLAIMDKKGNYENKFIPY</sequence>